<reference key="1">
    <citation type="journal article" date="2007" name="Nat. Biotechnol.">
        <title>Comparative analysis of the complete genome sequence of the plant growth-promoting bacterium Bacillus amyloliquefaciens FZB42.</title>
        <authorList>
            <person name="Chen X.H."/>
            <person name="Koumoutsi A."/>
            <person name="Scholz R."/>
            <person name="Eisenreich A."/>
            <person name="Schneider K."/>
            <person name="Heinemeyer I."/>
            <person name="Morgenstern B."/>
            <person name="Voss B."/>
            <person name="Hess W.R."/>
            <person name="Reva O."/>
            <person name="Junge H."/>
            <person name="Voigt B."/>
            <person name="Jungblut P.R."/>
            <person name="Vater J."/>
            <person name="Suessmuth R."/>
            <person name="Liesegang H."/>
            <person name="Strittmatter A."/>
            <person name="Gottschalk G."/>
            <person name="Borriss R."/>
        </authorList>
    </citation>
    <scope>NUCLEOTIDE SEQUENCE [LARGE SCALE GENOMIC DNA]</scope>
    <source>
        <strain>DSM 23117 / BGSC 10A6 / LMG 26770 / FZB42</strain>
    </source>
</reference>
<dbReference type="EC" id="5.4.99.12" evidence="1"/>
<dbReference type="EMBL" id="CP000560">
    <property type="protein sequence ID" value="ABS72596.1"/>
    <property type="molecule type" value="Genomic_DNA"/>
</dbReference>
<dbReference type="RefSeq" id="WP_011996198.1">
    <property type="nucleotide sequence ID" value="NC_009725.2"/>
</dbReference>
<dbReference type="SMR" id="A7Z0S0"/>
<dbReference type="GeneID" id="93079312"/>
<dbReference type="KEGG" id="bay:RBAM_001730"/>
<dbReference type="HOGENOM" id="CLU_014673_0_1_9"/>
<dbReference type="Proteomes" id="UP000001120">
    <property type="component" value="Chromosome"/>
</dbReference>
<dbReference type="GO" id="GO:0003723">
    <property type="term" value="F:RNA binding"/>
    <property type="evidence" value="ECO:0007669"/>
    <property type="project" value="InterPro"/>
</dbReference>
<dbReference type="GO" id="GO:0160147">
    <property type="term" value="F:tRNA pseudouridine(38-40) synthase activity"/>
    <property type="evidence" value="ECO:0007669"/>
    <property type="project" value="UniProtKB-EC"/>
</dbReference>
<dbReference type="GO" id="GO:0031119">
    <property type="term" value="P:tRNA pseudouridine synthesis"/>
    <property type="evidence" value="ECO:0007669"/>
    <property type="project" value="UniProtKB-UniRule"/>
</dbReference>
<dbReference type="CDD" id="cd02570">
    <property type="entry name" value="PseudoU_synth_EcTruA"/>
    <property type="match status" value="1"/>
</dbReference>
<dbReference type="FunFam" id="3.30.70.580:FF:000001">
    <property type="entry name" value="tRNA pseudouridine synthase A"/>
    <property type="match status" value="1"/>
</dbReference>
<dbReference type="Gene3D" id="3.30.70.660">
    <property type="entry name" value="Pseudouridine synthase I, catalytic domain, C-terminal subdomain"/>
    <property type="match status" value="1"/>
</dbReference>
<dbReference type="Gene3D" id="3.30.70.580">
    <property type="entry name" value="Pseudouridine synthase I, catalytic domain, N-terminal subdomain"/>
    <property type="match status" value="1"/>
</dbReference>
<dbReference type="HAMAP" id="MF_00171">
    <property type="entry name" value="TruA"/>
    <property type="match status" value="1"/>
</dbReference>
<dbReference type="InterPro" id="IPR020103">
    <property type="entry name" value="PsdUridine_synth_cat_dom_sf"/>
</dbReference>
<dbReference type="InterPro" id="IPR001406">
    <property type="entry name" value="PsdUridine_synth_TruA"/>
</dbReference>
<dbReference type="InterPro" id="IPR020097">
    <property type="entry name" value="PsdUridine_synth_TruA_a/b_dom"/>
</dbReference>
<dbReference type="InterPro" id="IPR020095">
    <property type="entry name" value="PsdUridine_synth_TruA_C"/>
</dbReference>
<dbReference type="InterPro" id="IPR020094">
    <property type="entry name" value="TruA/RsuA/RluB/E/F_N"/>
</dbReference>
<dbReference type="NCBIfam" id="TIGR00071">
    <property type="entry name" value="hisT_truA"/>
    <property type="match status" value="1"/>
</dbReference>
<dbReference type="PANTHER" id="PTHR11142">
    <property type="entry name" value="PSEUDOURIDYLATE SYNTHASE"/>
    <property type="match status" value="1"/>
</dbReference>
<dbReference type="PANTHER" id="PTHR11142:SF0">
    <property type="entry name" value="TRNA PSEUDOURIDINE SYNTHASE-LIKE 1"/>
    <property type="match status" value="1"/>
</dbReference>
<dbReference type="Pfam" id="PF01416">
    <property type="entry name" value="PseudoU_synth_1"/>
    <property type="match status" value="2"/>
</dbReference>
<dbReference type="PIRSF" id="PIRSF001430">
    <property type="entry name" value="tRNA_psdUrid_synth"/>
    <property type="match status" value="1"/>
</dbReference>
<dbReference type="SUPFAM" id="SSF55120">
    <property type="entry name" value="Pseudouridine synthase"/>
    <property type="match status" value="1"/>
</dbReference>
<keyword id="KW-0413">Isomerase</keyword>
<keyword id="KW-0819">tRNA processing</keyword>
<feature type="chain" id="PRO_1000017039" description="tRNA pseudouridine synthase A">
    <location>
        <begin position="1"/>
        <end position="247"/>
    </location>
</feature>
<feature type="active site" description="Nucleophile" evidence="1">
    <location>
        <position position="53"/>
    </location>
</feature>
<feature type="binding site" evidence="1">
    <location>
        <position position="111"/>
    </location>
    <ligand>
        <name>substrate</name>
    </ligand>
</feature>
<gene>
    <name evidence="1" type="primary">truA</name>
    <name type="ordered locus">RBAM_001730</name>
</gene>
<accession>A7Z0S0</accession>
<protein>
    <recommendedName>
        <fullName evidence="1">tRNA pseudouridine synthase A</fullName>
        <ecNumber evidence="1">5.4.99.12</ecNumber>
    </recommendedName>
    <alternativeName>
        <fullName evidence="1">tRNA pseudouridine(38-40) synthase</fullName>
    </alternativeName>
    <alternativeName>
        <fullName evidence="1">tRNA pseudouridylate synthase I</fullName>
    </alternativeName>
    <alternativeName>
        <fullName evidence="1">tRNA-uridine isomerase I</fullName>
    </alternativeName>
</protein>
<evidence type="ECO:0000255" key="1">
    <source>
        <dbReference type="HAMAP-Rule" id="MF_00171"/>
    </source>
</evidence>
<organism>
    <name type="scientific">Bacillus velezensis (strain DSM 23117 / BGSC 10A6 / LMG 26770 / FZB42)</name>
    <name type="common">Bacillus amyloliquefaciens subsp. plantarum</name>
    <dbReference type="NCBI Taxonomy" id="326423"/>
    <lineage>
        <taxon>Bacteria</taxon>
        <taxon>Bacillati</taxon>
        <taxon>Bacillota</taxon>
        <taxon>Bacilli</taxon>
        <taxon>Bacillales</taxon>
        <taxon>Bacillaceae</taxon>
        <taxon>Bacillus</taxon>
        <taxon>Bacillus amyloliquefaciens group</taxon>
    </lineage>
</organism>
<proteinExistence type="inferred from homology"/>
<name>TRUA_BACVZ</name>
<sequence>MRVKCTIAYDGHLFNGYQVQPGKRTVQSELEKALAVIHKTDGRVPVYSSGRTDSDVHAAGQVIHFDTPLSIPGEKWPFALNALLPDDIAVKTAEIADDGFHARFSAVQKEYRYFVYTEKHPDVFKRHYAYHFAYPLNVQKMREASRHLVGTHDFTSFCAADTAVQDKVRTIYELDWTETVDGLQMRITGNGFLYNMVRIIAGTLLDTGAGKFSPDDVKAMLEAKDREAAGRTAPGHGLYLWSVCYDN</sequence>
<comment type="function">
    <text evidence="1">Formation of pseudouridine at positions 38, 39 and 40 in the anticodon stem and loop of transfer RNAs.</text>
</comment>
<comment type="catalytic activity">
    <reaction evidence="1">
        <text>uridine(38/39/40) in tRNA = pseudouridine(38/39/40) in tRNA</text>
        <dbReference type="Rhea" id="RHEA:22376"/>
        <dbReference type="Rhea" id="RHEA-COMP:10085"/>
        <dbReference type="Rhea" id="RHEA-COMP:10087"/>
        <dbReference type="ChEBI" id="CHEBI:65314"/>
        <dbReference type="ChEBI" id="CHEBI:65315"/>
        <dbReference type="EC" id="5.4.99.12"/>
    </reaction>
</comment>
<comment type="subunit">
    <text evidence="1">Homodimer.</text>
</comment>
<comment type="similarity">
    <text evidence="1">Belongs to the tRNA pseudouridine synthase TruA family.</text>
</comment>